<reference key="1">
    <citation type="journal article" date="1993" name="Biochemistry">
        <title>Characterization of recombinant human farnesyl-protein transferase: cloning, expression, farnesyl diphosphate binding, and functional homology with yeast prenyl-protein transferases.</title>
        <authorList>
            <person name="Omer C.A."/>
            <person name="Kral A.M."/>
            <person name="Diehl R.E."/>
            <person name="Prendergast G.C."/>
            <person name="Powers S."/>
            <person name="Allen C.M."/>
            <person name="Gibbs J.B."/>
            <person name="Kohl N.E."/>
        </authorList>
    </citation>
    <scope>NUCLEOTIDE SEQUENCE [MRNA] (ISOFORM 1)</scope>
    <scope>MUTAGENESIS OF ASP-200; GLY-249 AND GLY-349</scope>
    <scope>CATALYTIC ACTIVITY</scope>
    <scope>FUNCTION</scope>
    <scope>SUBUNIT</scope>
    <source>
        <tissue>Placenta</tissue>
    </source>
</reference>
<reference key="2">
    <citation type="journal article" date="2004" name="Nat. Genet.">
        <title>Complete sequencing and characterization of 21,243 full-length human cDNAs.</title>
        <authorList>
            <person name="Ota T."/>
            <person name="Suzuki Y."/>
            <person name="Nishikawa T."/>
            <person name="Otsuki T."/>
            <person name="Sugiyama T."/>
            <person name="Irie R."/>
            <person name="Wakamatsu A."/>
            <person name="Hayashi K."/>
            <person name="Sato H."/>
            <person name="Nagai K."/>
            <person name="Kimura K."/>
            <person name="Makita H."/>
            <person name="Sekine M."/>
            <person name="Obayashi M."/>
            <person name="Nishi T."/>
            <person name="Shibahara T."/>
            <person name="Tanaka T."/>
            <person name="Ishii S."/>
            <person name="Yamamoto J."/>
            <person name="Saito K."/>
            <person name="Kawai Y."/>
            <person name="Isono Y."/>
            <person name="Nakamura Y."/>
            <person name="Nagahari K."/>
            <person name="Murakami K."/>
            <person name="Yasuda T."/>
            <person name="Iwayanagi T."/>
            <person name="Wagatsuma M."/>
            <person name="Shiratori A."/>
            <person name="Sudo H."/>
            <person name="Hosoiri T."/>
            <person name="Kaku Y."/>
            <person name="Kodaira H."/>
            <person name="Kondo H."/>
            <person name="Sugawara M."/>
            <person name="Takahashi M."/>
            <person name="Kanda K."/>
            <person name="Yokoi T."/>
            <person name="Furuya T."/>
            <person name="Kikkawa E."/>
            <person name="Omura Y."/>
            <person name="Abe K."/>
            <person name="Kamihara K."/>
            <person name="Katsuta N."/>
            <person name="Sato K."/>
            <person name="Tanikawa M."/>
            <person name="Yamazaki M."/>
            <person name="Ninomiya K."/>
            <person name="Ishibashi T."/>
            <person name="Yamashita H."/>
            <person name="Murakawa K."/>
            <person name="Fujimori K."/>
            <person name="Tanai H."/>
            <person name="Kimata M."/>
            <person name="Watanabe M."/>
            <person name="Hiraoka S."/>
            <person name="Chiba Y."/>
            <person name="Ishida S."/>
            <person name="Ono Y."/>
            <person name="Takiguchi S."/>
            <person name="Watanabe S."/>
            <person name="Yosida M."/>
            <person name="Hotuta T."/>
            <person name="Kusano J."/>
            <person name="Kanehori K."/>
            <person name="Takahashi-Fujii A."/>
            <person name="Hara H."/>
            <person name="Tanase T.-O."/>
            <person name="Nomura Y."/>
            <person name="Togiya S."/>
            <person name="Komai F."/>
            <person name="Hara R."/>
            <person name="Takeuchi K."/>
            <person name="Arita M."/>
            <person name="Imose N."/>
            <person name="Musashino K."/>
            <person name="Yuuki H."/>
            <person name="Oshima A."/>
            <person name="Sasaki N."/>
            <person name="Aotsuka S."/>
            <person name="Yoshikawa Y."/>
            <person name="Matsunawa H."/>
            <person name="Ichihara T."/>
            <person name="Shiohata N."/>
            <person name="Sano S."/>
            <person name="Moriya S."/>
            <person name="Momiyama H."/>
            <person name="Satoh N."/>
            <person name="Takami S."/>
            <person name="Terashima Y."/>
            <person name="Suzuki O."/>
            <person name="Nakagawa S."/>
            <person name="Senoh A."/>
            <person name="Mizoguchi H."/>
            <person name="Goto Y."/>
            <person name="Shimizu F."/>
            <person name="Wakebe H."/>
            <person name="Hishigaki H."/>
            <person name="Watanabe T."/>
            <person name="Sugiyama A."/>
            <person name="Takemoto M."/>
            <person name="Kawakami B."/>
            <person name="Yamazaki M."/>
            <person name="Watanabe K."/>
            <person name="Kumagai A."/>
            <person name="Itakura S."/>
            <person name="Fukuzumi Y."/>
            <person name="Fujimori Y."/>
            <person name="Komiyama M."/>
            <person name="Tashiro H."/>
            <person name="Tanigami A."/>
            <person name="Fujiwara T."/>
            <person name="Ono T."/>
            <person name="Yamada K."/>
            <person name="Fujii Y."/>
            <person name="Ozaki K."/>
            <person name="Hirao M."/>
            <person name="Ohmori Y."/>
            <person name="Kawabata A."/>
            <person name="Hikiji T."/>
            <person name="Kobatake N."/>
            <person name="Inagaki H."/>
            <person name="Ikema Y."/>
            <person name="Okamoto S."/>
            <person name="Okitani R."/>
            <person name="Kawakami T."/>
            <person name="Noguchi S."/>
            <person name="Itoh T."/>
            <person name="Shigeta K."/>
            <person name="Senba T."/>
            <person name="Matsumura K."/>
            <person name="Nakajima Y."/>
            <person name="Mizuno T."/>
            <person name="Morinaga M."/>
            <person name="Sasaki M."/>
            <person name="Togashi T."/>
            <person name="Oyama M."/>
            <person name="Hata H."/>
            <person name="Watanabe M."/>
            <person name="Komatsu T."/>
            <person name="Mizushima-Sugano J."/>
            <person name="Satoh T."/>
            <person name="Shirai Y."/>
            <person name="Takahashi Y."/>
            <person name="Nakagawa K."/>
            <person name="Okumura K."/>
            <person name="Nagase T."/>
            <person name="Nomura N."/>
            <person name="Kikuchi H."/>
            <person name="Masuho Y."/>
            <person name="Yamashita R."/>
            <person name="Nakai K."/>
            <person name="Yada T."/>
            <person name="Nakamura Y."/>
            <person name="Ohara O."/>
            <person name="Isogai T."/>
            <person name="Sugano S."/>
        </authorList>
    </citation>
    <scope>NUCLEOTIDE SEQUENCE [LARGE SCALE MRNA] (ISOFORMS 1 AND 2)</scope>
    <source>
        <tissue>Kidney</tissue>
        <tissue>Testis</tissue>
    </source>
</reference>
<reference key="3">
    <citation type="journal article" date="2003" name="Nature">
        <title>The DNA sequence and analysis of human chromosome 14.</title>
        <authorList>
            <person name="Heilig R."/>
            <person name="Eckenberg R."/>
            <person name="Petit J.-L."/>
            <person name="Fonknechten N."/>
            <person name="Da Silva C."/>
            <person name="Cattolico L."/>
            <person name="Levy M."/>
            <person name="Barbe V."/>
            <person name="De Berardinis V."/>
            <person name="Ureta-Vidal A."/>
            <person name="Pelletier E."/>
            <person name="Vico V."/>
            <person name="Anthouard V."/>
            <person name="Rowen L."/>
            <person name="Madan A."/>
            <person name="Qin S."/>
            <person name="Sun H."/>
            <person name="Du H."/>
            <person name="Pepin K."/>
            <person name="Artiguenave F."/>
            <person name="Robert C."/>
            <person name="Cruaud C."/>
            <person name="Bruels T."/>
            <person name="Jaillon O."/>
            <person name="Friedlander L."/>
            <person name="Samson G."/>
            <person name="Brottier P."/>
            <person name="Cure S."/>
            <person name="Segurens B."/>
            <person name="Aniere F."/>
            <person name="Samain S."/>
            <person name="Crespeau H."/>
            <person name="Abbasi N."/>
            <person name="Aiach N."/>
            <person name="Boscus D."/>
            <person name="Dickhoff R."/>
            <person name="Dors M."/>
            <person name="Dubois I."/>
            <person name="Friedman C."/>
            <person name="Gouyvenoux M."/>
            <person name="James R."/>
            <person name="Madan A."/>
            <person name="Mairey-Estrada B."/>
            <person name="Mangenot S."/>
            <person name="Martins N."/>
            <person name="Menard M."/>
            <person name="Oztas S."/>
            <person name="Ratcliffe A."/>
            <person name="Shaffer T."/>
            <person name="Trask B."/>
            <person name="Vacherie B."/>
            <person name="Bellemere C."/>
            <person name="Belser C."/>
            <person name="Besnard-Gonnet M."/>
            <person name="Bartol-Mavel D."/>
            <person name="Boutard M."/>
            <person name="Briez-Silla S."/>
            <person name="Combette S."/>
            <person name="Dufosse-Laurent V."/>
            <person name="Ferron C."/>
            <person name="Lechaplais C."/>
            <person name="Louesse C."/>
            <person name="Muselet D."/>
            <person name="Magdelenat G."/>
            <person name="Pateau E."/>
            <person name="Petit E."/>
            <person name="Sirvain-Trukniewicz P."/>
            <person name="Trybou A."/>
            <person name="Vega-Czarny N."/>
            <person name="Bataille E."/>
            <person name="Bluet E."/>
            <person name="Bordelais I."/>
            <person name="Dubois M."/>
            <person name="Dumont C."/>
            <person name="Guerin T."/>
            <person name="Haffray S."/>
            <person name="Hammadi R."/>
            <person name="Muanga J."/>
            <person name="Pellouin V."/>
            <person name="Robert D."/>
            <person name="Wunderle E."/>
            <person name="Gauguet G."/>
            <person name="Roy A."/>
            <person name="Sainte-Marthe L."/>
            <person name="Verdier J."/>
            <person name="Verdier-Discala C."/>
            <person name="Hillier L.W."/>
            <person name="Fulton L."/>
            <person name="McPherson J."/>
            <person name="Matsuda F."/>
            <person name="Wilson R."/>
            <person name="Scarpelli C."/>
            <person name="Gyapay G."/>
            <person name="Wincker P."/>
            <person name="Saurin W."/>
            <person name="Quetier F."/>
            <person name="Waterston R."/>
            <person name="Hood L."/>
            <person name="Weissenbach J."/>
        </authorList>
    </citation>
    <scope>NUCLEOTIDE SEQUENCE [LARGE SCALE GENOMIC DNA]</scope>
</reference>
<reference key="4">
    <citation type="submission" date="2005-07" db="EMBL/GenBank/DDBJ databases">
        <authorList>
            <person name="Mural R.J."/>
            <person name="Istrail S."/>
            <person name="Sutton G.G."/>
            <person name="Florea L."/>
            <person name="Halpern A.L."/>
            <person name="Mobarry C.M."/>
            <person name="Lippert R."/>
            <person name="Walenz B."/>
            <person name="Shatkay H."/>
            <person name="Dew I."/>
            <person name="Miller J.R."/>
            <person name="Flanigan M.J."/>
            <person name="Edwards N.J."/>
            <person name="Bolanos R."/>
            <person name="Fasulo D."/>
            <person name="Halldorsson B.V."/>
            <person name="Hannenhalli S."/>
            <person name="Turner R."/>
            <person name="Yooseph S."/>
            <person name="Lu F."/>
            <person name="Nusskern D.R."/>
            <person name="Shue B.C."/>
            <person name="Zheng X.H."/>
            <person name="Zhong F."/>
            <person name="Delcher A.L."/>
            <person name="Huson D.H."/>
            <person name="Kravitz S.A."/>
            <person name="Mouchard L."/>
            <person name="Reinert K."/>
            <person name="Remington K.A."/>
            <person name="Clark A.G."/>
            <person name="Waterman M.S."/>
            <person name="Eichler E.E."/>
            <person name="Adams M.D."/>
            <person name="Hunkapiller M.W."/>
            <person name="Myers E.W."/>
            <person name="Venter J.C."/>
        </authorList>
    </citation>
    <scope>NUCLEOTIDE SEQUENCE [LARGE SCALE GENOMIC DNA]</scope>
</reference>
<reference key="5">
    <citation type="journal article" date="2004" name="Genome Res.">
        <title>The status, quality, and expansion of the NIH full-length cDNA project: the Mammalian Gene Collection (MGC).</title>
        <authorList>
            <consortium name="The MGC Project Team"/>
        </authorList>
    </citation>
    <scope>NUCLEOTIDE SEQUENCE [LARGE SCALE MRNA] (ISOFORM 1)</scope>
    <source>
        <tissue>Placenta</tissue>
    </source>
</reference>
<reference key="6">
    <citation type="journal article" date="1993" name="Genomics">
        <title>cDNA cloning of the two subunits of human CAAX farnesyltransferase and chromosomal mapping of FNTA and FNTB loci and related sequences.</title>
        <authorList>
            <person name="Andres D.A."/>
            <person name="Milatovich A."/>
            <person name="Ozcelik T."/>
            <person name="Wenzlau J.M."/>
            <person name="Brown M.S."/>
            <person name="Goldstein J.L."/>
            <person name="Francke U."/>
        </authorList>
    </citation>
    <scope>NUCLEOTIDE SEQUENCE [MRNA] OF 51-437 (ISOFORM 1/2)</scope>
    <source>
        <tissue>Retina</tissue>
    </source>
</reference>
<reference key="7">
    <citation type="journal article" date="2006" name="Cell">
        <title>Global, in vivo, and site-specific phosphorylation dynamics in signaling networks.</title>
        <authorList>
            <person name="Olsen J.V."/>
            <person name="Blagoev B."/>
            <person name="Gnad F."/>
            <person name="Macek B."/>
            <person name="Kumar C."/>
            <person name="Mortensen P."/>
            <person name="Mann M."/>
        </authorList>
    </citation>
    <scope>IDENTIFICATION BY MASS SPECTROMETRY [LARGE SCALE ANALYSIS]</scope>
    <source>
        <tissue>Cervix carcinoma</tissue>
    </source>
</reference>
<reference key="8">
    <citation type="journal article" date="2011" name="BMC Syst. Biol.">
        <title>Initial characterization of the human central proteome.</title>
        <authorList>
            <person name="Burkard T.R."/>
            <person name="Planyavsky M."/>
            <person name="Kaupe I."/>
            <person name="Breitwieser F.P."/>
            <person name="Buerckstuemmer T."/>
            <person name="Bennett K.L."/>
            <person name="Superti-Furga G."/>
            <person name="Colinge J."/>
        </authorList>
    </citation>
    <scope>IDENTIFICATION BY MASS SPECTROMETRY [LARGE SCALE ANALYSIS]</scope>
</reference>
<reference key="9">
    <citation type="journal article" date="2001" name="Proc. Natl. Acad. Sci. U.S.A.">
        <title>The crystal structure of human protein farnesyltransferase reveals the basis for inhibition by CaaX tetrapeptides and their mimetics.</title>
        <authorList>
            <person name="Long S.B."/>
            <person name="Hancock P.J."/>
            <person name="Kral A.M."/>
            <person name="Hellinga H.W."/>
            <person name="Beese L.S."/>
        </authorList>
    </citation>
    <scope>X-RAY CRYSTALLOGRAPHY (2.3 ANGSTROMS) IN COMPLEX WITH ZINC IONS; FNTA; FARNESYL DIPHOSPHATE AND INHIBITOR L-739,750</scope>
    <scope>SUBUNIT</scope>
    <scope>COFACTOR</scope>
</reference>
<reference key="10">
    <citation type="journal article" date="2002" name="J. Med. Chem.">
        <title>3-aminopyrrolidinone farnesyltransferase inhibitors: design of macrocyclic compounds with improved pharmacokinetics and excellent cell potency.</title>
        <authorList>
            <person name="Bell I.M."/>
            <person name="Gallicchio S.N."/>
            <person name="Abrams M."/>
            <person name="Beese L.S."/>
            <person name="Beshore D.C."/>
            <person name="Bhimnathwala H."/>
            <person name="Bogusky M.J."/>
            <person name="Buser C.A."/>
            <person name="Culberson J.C."/>
            <person name="Davide J."/>
            <person name="Ellis-Hutchings M."/>
            <person name="Fernandes C."/>
            <person name="Gibbs J.B."/>
            <person name="Graham S.L."/>
            <person name="Hamilton K.A."/>
            <person name="Hartman G.D."/>
            <person name="Heimbrook D.C."/>
            <person name="Homnick C.F."/>
            <person name="Huber H.E."/>
            <person name="Huff J.R."/>
            <person name="Kassahun K."/>
            <person name="Koblan K.S."/>
            <person name="Kohl N.E."/>
            <person name="Lobell R.B."/>
            <person name="Lynch J.J. Jr."/>
            <person name="Robinson R."/>
            <person name="Rodrigues A.D."/>
            <person name="Taylor J.S."/>
            <person name="Walsh E.S."/>
            <person name="Williams T.M."/>
            <person name="Zartman C.B."/>
        </authorList>
    </citation>
    <scope>X-RAY CRYSTALLOGRAPHY (2.0 ANGSTROMS) IN COMPLEX WITH ZINC IONS; FNTA; FARNESYL DIPHOSPHATE AND INHIBITORS</scope>
    <scope>SUBUNIT</scope>
    <scope>COFACTOR</scope>
    <scope>CATALYTIC ACTIVITY</scope>
    <scope>FUNCTION</scope>
</reference>
<reference key="11">
    <citation type="journal article" date="2003" name="J. Med. Chem.">
        <title>Dual protein farnesyltransferase-geranylgeranyltransferase-I inhibitors as potential cancer chemotherapeutic agents.</title>
        <authorList>
            <person name="deSolms S.J."/>
            <person name="Ciccarone T.M."/>
            <person name="MacTough S.C."/>
            <person name="Shaw A.W."/>
            <person name="Buser C.A."/>
            <person name="Ellis-Hutchings M."/>
            <person name="Fernandes C."/>
            <person name="Hamilton K.A."/>
            <person name="Huber H.E."/>
            <person name="Kohl N.E."/>
            <person name="Lobell R.B."/>
            <person name="Robinson R.G."/>
            <person name="Tsou N.N."/>
            <person name="Walsh E.S."/>
            <person name="Graham S.L."/>
            <person name="Beese L.S."/>
            <person name="Taylor J.S."/>
        </authorList>
    </citation>
    <scope>X-RAY CRYSTALLOGRAPHY (2.0 ANGSTROMS) IN COMPLEX WITH ZINC IONS; FNTA; FARNESYL DIPHOSPHATE AND INHIBITOR</scope>
    <scope>SUBUNIT</scope>
    <scope>COFACTOR</scope>
    <scope>CATALYTIC ACTIVITY</scope>
    <scope>FUNCTION</scope>
</reference>
<reference key="12">
    <citation type="journal article" date="2004" name="J. Mol. Biol.">
        <title>Crystallographic analysis of CaaX prenyltransferases complexed with substrates defines rules of protein substrate selectivity.</title>
        <authorList>
            <person name="Reid T.S."/>
            <person name="Terry K.L."/>
            <person name="Casey P.J."/>
            <person name="Beese L.S."/>
        </authorList>
    </citation>
    <scope>X-RAY CRYSTALLOGRAPHY (1.80 ANGSTROMS) IN COMPLEX WITH ZINC IONS; FNTA AND FARNESYL DIPHOSPHATE ANALOG</scope>
    <scope>COFACTOR</scope>
    <scope>SUBUNIT</scope>
</reference>
<reference key="13">
    <citation type="journal article" date="2006" name="Biochemistry">
        <title>Conversion of protein farnesyltransferase to a geranylgeranyltransferase.</title>
        <authorList>
            <person name="Terry K.L."/>
            <person name="Casey P.J."/>
            <person name="Beese L.S."/>
        </authorList>
    </citation>
    <scope>X-RAY CRYSTALLOGRAPHY (1.50 ANGSTROMS) IN COMPLEX WITH ZINC IONS; FNTA AND FARNESYL DIPHOSPHATE ANALOG</scope>
    <scope>CATALYTIC ACTIVITY</scope>
    <scope>COFACTOR</scope>
    <scope>SUBUNIT</scope>
    <scope>FUNCTION</scope>
    <scope>MUTAGENESIS OF TRP-102</scope>
</reference>
<reference key="14">
    <citation type="journal article" date="2009" name="Chem. Biol.">
        <title>Structural basis for binding and selectivity of antimalarial and anticancer ethylenediamine inhibitors to protein farnesyltransferase.</title>
        <authorList>
            <person name="Hast M.A."/>
            <person name="Fletcher S."/>
            <person name="Cummings C.G."/>
            <person name="Pusateri E.E."/>
            <person name="Blaskovich M.A."/>
            <person name="Rivas K."/>
            <person name="Gelb M.H."/>
            <person name="Van Voorhis W.C."/>
            <person name="Sebti S.M."/>
            <person name="Hamilton A.D."/>
            <person name="Beese L.S."/>
        </authorList>
    </citation>
    <scope>X-RAY CRYSTALLOGRAPHY (1.80 ANGSTROMS) IN COMPLEX WITH ZINC IONS AND FNTA</scope>
    <scope>CATALYTIC ACTIVITY</scope>
    <scope>FUNCTION</scope>
    <scope>COFACTOR</scope>
    <scope>SUBUNIT</scope>
</reference>
<sequence length="437" mass="48774">MASPSSFTYYCPPSSSPVWSEPLYSLRPEHARERLQDDSVETVTSIEQAKVEEKIQEVFSSYKFNHLVPRLVLQREKHFHYLKRGLRQLTDAYECLDASRPWLCYWILHSLELLDEPIPQIVATDVCQFLELCQSPEGGFGGGPGQYPHLAPTYAAVNALCIIGTEEAYDIINREKLLQYLYSLKQPDGSFLMHVGGEVDVRSAYCAASVASLTNIITPDLFEGTAEWIARCQNWEGGIGGVPGMEAHGGYTFCGLAALVILKRERSLNLKSLLQWVTSRQMRFEGGFQGRCNKLVDGCYSFWQAGLLPLLHRALHAQGDPALSMSHWMFHQQALQEYILMCCQCPAGGLLDKPGKSRDFYHTCYCLSGLSIAQHFGSGAMLHDVVLGVPENALQPTHPVYNIGPDKVIQATTYFLQKPVPGFEELKDETSAEPATD</sequence>
<proteinExistence type="evidence at protein level"/>
<gene>
    <name type="primary">FNTB</name>
</gene>
<keyword id="KW-0002">3D-structure</keyword>
<keyword id="KW-0025">Alternative splicing</keyword>
<keyword id="KW-0443">Lipid metabolism</keyword>
<keyword id="KW-0479">Metal-binding</keyword>
<keyword id="KW-0597">Phosphoprotein</keyword>
<keyword id="KW-0637">Prenyltransferase</keyword>
<keyword id="KW-1267">Proteomics identification</keyword>
<keyword id="KW-1185">Reference proteome</keyword>
<keyword id="KW-0677">Repeat</keyword>
<keyword id="KW-0808">Transferase</keyword>
<keyword id="KW-0862">Zinc</keyword>
<evidence type="ECO:0000250" key="1">
    <source>
        <dbReference type="UniProtKB" id="Q8K2I1"/>
    </source>
</evidence>
<evidence type="ECO:0000269" key="2">
    <source>
    </source>
</evidence>
<evidence type="ECO:0000269" key="3">
    <source>
    </source>
</evidence>
<evidence type="ECO:0000269" key="4">
    <source>
    </source>
</evidence>
<evidence type="ECO:0000269" key="5">
    <source>
    </source>
</evidence>
<evidence type="ECO:0000269" key="6">
    <source>
    </source>
</evidence>
<evidence type="ECO:0000269" key="7">
    <source>
    </source>
</evidence>
<evidence type="ECO:0000269" key="8">
    <source>
    </source>
</evidence>
<evidence type="ECO:0000303" key="9">
    <source>
    </source>
</evidence>
<evidence type="ECO:0000305" key="10"/>
<evidence type="ECO:0007829" key="11">
    <source>
        <dbReference type="PDB" id="2F0Y"/>
    </source>
</evidence>
<evidence type="ECO:0007829" key="12">
    <source>
        <dbReference type="PDB" id="2H6F"/>
    </source>
</evidence>
<evidence type="ECO:0007829" key="13">
    <source>
        <dbReference type="PDB" id="2IEJ"/>
    </source>
</evidence>
<accession>P49356</accession>
<accession>B2RDX6</accession>
<accession>B4E1A0</accession>
<comment type="function">
    <text evidence="3 4 6 7 8">Essential subunit of the farnesyltransferase complex. Catalyzes the transfer of a farnesyl moiety from farnesyl diphosphate to a cysteine at the fourth position from the C-terminus of several proteins having the C-terminal sequence Cys-aliphatic-aliphatic-X.</text>
</comment>
<comment type="catalytic activity">
    <reaction evidence="3 4 6 7 8">
        <text>L-cysteinyl-[protein] + (2E,6E)-farnesyl diphosphate = S-(2E,6E)-farnesyl-L-cysteinyl-[protein] + diphosphate</text>
        <dbReference type="Rhea" id="RHEA:13345"/>
        <dbReference type="Rhea" id="RHEA-COMP:10131"/>
        <dbReference type="Rhea" id="RHEA-COMP:11535"/>
        <dbReference type="ChEBI" id="CHEBI:29950"/>
        <dbReference type="ChEBI" id="CHEBI:33019"/>
        <dbReference type="ChEBI" id="CHEBI:86019"/>
        <dbReference type="ChEBI" id="CHEBI:175763"/>
        <dbReference type="EC" id="2.5.1.58"/>
    </reaction>
</comment>
<comment type="cofactor">
    <cofactor evidence="2 3 4 5 6 7">
        <name>Zn(2+)</name>
        <dbReference type="ChEBI" id="CHEBI:29105"/>
    </cofactor>
    <text evidence="2 3 4 5 6 7">Binds 1 zinc ion per subunit.</text>
</comment>
<comment type="subunit">
    <text evidence="2 3 4 5 6 7 8">Heterodimer of FNTA and FNTB.</text>
</comment>
<comment type="interaction">
    <interactant intactId="EBI-602349">
        <id>P49356</id>
    </interactant>
    <interactant intactId="EBI-727098">
        <id>P21549</id>
        <label>AGXT</label>
    </interactant>
    <organismsDiffer>false</organismsDiffer>
    <experiments>3</experiments>
</comment>
<comment type="interaction">
    <interactant intactId="EBI-602349">
        <id>P49356</id>
    </interactant>
    <interactant intactId="EBI-11574440">
        <id>Q9BWW8</id>
        <label>APOL6</label>
    </interactant>
    <organismsDiffer>false</organismsDiffer>
    <experiments>3</experiments>
</comment>
<comment type="interaction">
    <interactant intactId="EBI-602349">
        <id>P49356</id>
    </interactant>
    <interactant intactId="EBI-1166928">
        <id>Q8N5M1</id>
        <label>ATPAF2</label>
    </interactant>
    <organismsDiffer>false</organismsDiffer>
    <experiments>3</experiments>
</comment>
<comment type="interaction">
    <interactant intactId="EBI-602349">
        <id>P49356</id>
    </interactant>
    <interactant intactId="EBI-1104933">
        <id>Q8N4L8</id>
        <label>CCDC24</label>
    </interactant>
    <organismsDiffer>false</organismsDiffer>
    <experiments>3</experiments>
</comment>
<comment type="interaction">
    <interactant intactId="EBI-602349">
        <id>P49356</id>
    </interactant>
    <interactant intactId="EBI-10976677">
        <id>G5E9A7</id>
        <label>DMWD</label>
    </interactant>
    <organismsDiffer>false</organismsDiffer>
    <experiments>3</experiments>
</comment>
<comment type="interaction">
    <interactant intactId="EBI-602349">
        <id>P49356</id>
    </interactant>
    <interactant intactId="EBI-602336">
        <id>P49354</id>
        <label>FNTA</label>
    </interactant>
    <organismsDiffer>false</organismsDiffer>
    <experiments>16</experiments>
</comment>
<comment type="interaction">
    <interactant intactId="EBI-602349">
        <id>P49356</id>
    </interactant>
    <interactant intactId="EBI-1752118">
        <id>P31273</id>
        <label>HOXC8</label>
    </interactant>
    <organismsDiffer>false</organismsDiffer>
    <experiments>3</experiments>
</comment>
<comment type="interaction">
    <interactant intactId="EBI-602349">
        <id>P49356</id>
    </interactant>
    <interactant intactId="EBI-14148872">
        <id>A5PL33-2</id>
        <label>KRBA1</label>
    </interactant>
    <organismsDiffer>false</organismsDiffer>
    <experiments>3</experiments>
</comment>
<comment type="interaction">
    <interactant intactId="EBI-602349">
        <id>P49356</id>
    </interactant>
    <interactant intactId="EBI-2872322">
        <id>Q9H0W8</id>
        <label>SMG9</label>
    </interactant>
    <organismsDiffer>false</organismsDiffer>
    <experiments>3</experiments>
</comment>
<comment type="interaction">
    <interactant intactId="EBI-602349">
        <id>P49356</id>
    </interactant>
    <interactant intactId="EBI-5235340">
        <id>Q7Z699</id>
        <label>SPRED1</label>
    </interactant>
    <organismsDiffer>false</organismsDiffer>
    <experiments>3</experiments>
</comment>
<comment type="interaction">
    <interactant intactId="EBI-602349">
        <id>P49356</id>
    </interactant>
    <interactant intactId="EBI-3939165">
        <id>O43711</id>
        <label>TLX3</label>
    </interactant>
    <organismsDiffer>false</organismsDiffer>
    <experiments>3</experiments>
</comment>
<comment type="alternative products">
    <event type="alternative splicing"/>
    <isoform>
        <id>P49356-1</id>
        <name>1</name>
        <sequence type="displayed"/>
    </isoform>
    <isoform>
        <id>P49356-2</id>
        <name>2</name>
        <sequence type="described" ref="VSP_054657"/>
    </isoform>
</comment>
<comment type="similarity">
    <text evidence="10">Belongs to the protein prenyltransferase subunit beta family.</text>
</comment>
<feature type="chain" id="PRO_0000119761" description="Protein farnesyltransferase subunit beta">
    <location>
        <begin position="1"/>
        <end position="437"/>
    </location>
</feature>
<feature type="repeat" description="PFTB 1">
    <location>
        <begin position="123"/>
        <end position="164"/>
    </location>
</feature>
<feature type="repeat" description="PFTB 2">
    <location>
        <begin position="174"/>
        <end position="215"/>
    </location>
</feature>
<feature type="repeat" description="PFTB 3">
    <location>
        <begin position="222"/>
        <end position="263"/>
    </location>
</feature>
<feature type="repeat" description="PFTB 4">
    <location>
        <begin position="270"/>
        <end position="312"/>
    </location>
</feature>
<feature type="repeat" description="PFTB 5">
    <location>
        <begin position="332"/>
        <end position="374"/>
    </location>
</feature>
<feature type="binding site" evidence="2 3 4 5 6">
    <location>
        <begin position="248"/>
        <end position="251"/>
    </location>
    <ligand>
        <name>(2E,6E)-farnesyl diphosphate</name>
        <dbReference type="ChEBI" id="CHEBI:175763"/>
    </ligand>
</feature>
<feature type="binding site" evidence="2 3 4 5 6">
    <location>
        <begin position="291"/>
        <end position="294"/>
    </location>
    <ligand>
        <name>(2E,6E)-farnesyl diphosphate</name>
        <dbReference type="ChEBI" id="CHEBI:175763"/>
    </ligand>
</feature>
<feature type="binding site" evidence="2 3 4 5 6 7">
    <location>
        <position position="297"/>
    </location>
    <ligand>
        <name>Zn(2+)</name>
        <dbReference type="ChEBI" id="CHEBI:29105"/>
        <note>catalytic</note>
    </ligand>
</feature>
<feature type="binding site" evidence="2 3 4 5 6 7">
    <location>
        <position position="299"/>
    </location>
    <ligand>
        <name>Zn(2+)</name>
        <dbReference type="ChEBI" id="CHEBI:29105"/>
        <note>catalytic</note>
    </ligand>
</feature>
<feature type="binding site" evidence="2 3 4 5 6">
    <location>
        <begin position="300"/>
        <end position="303"/>
    </location>
    <ligand>
        <name>(2E,6E)-farnesyl diphosphate</name>
        <dbReference type="ChEBI" id="CHEBI:175763"/>
    </ligand>
</feature>
<feature type="binding site" evidence="2 3 4 5 6 7">
    <location>
        <position position="362"/>
    </location>
    <ligand>
        <name>Zn(2+)</name>
        <dbReference type="ChEBI" id="CHEBI:29105"/>
        <note>catalytic</note>
    </ligand>
</feature>
<feature type="site" description="Important for selectivity against geranylgeranyl diphosphate" evidence="6">
    <location>
        <position position="102"/>
    </location>
</feature>
<feature type="modified residue" description="Phosphothreonine" evidence="1">
    <location>
        <position position="436"/>
    </location>
</feature>
<feature type="splice variant" id="VSP_054657" description="In isoform 2." evidence="9">
    <original>MASPSSFTYYCPPSSSPVWSEPLYSLRPEHARERLQDDSVETVTSIEQ</original>
    <variation>MI</variation>
    <location>
        <begin position="1"/>
        <end position="48"/>
    </location>
</feature>
<feature type="mutagenesis site" description="Removes the steric hindrance that normally precludes geranylgeranyl diphosphate binding. Reduces farnesyltransferase activity and confers geranylgeranyltransferase activity." evidence="6">
    <original>W</original>
    <variation>T</variation>
    <location>
        <position position="102"/>
    </location>
</feature>
<feature type="mutagenesis site" description="Reduced catalytic efficiency." evidence="8">
    <original>D</original>
    <variation>N</variation>
    <location>
        <position position="200"/>
    </location>
</feature>
<feature type="mutagenesis site" description="Reduced catalytic efficiency." evidence="8">
    <original>G</original>
    <variation>V</variation>
    <location>
        <position position="249"/>
    </location>
</feature>
<feature type="mutagenesis site" description="Reduced catalytic efficiency." evidence="8">
    <original>G</original>
    <variation>S</variation>
    <location>
        <position position="349"/>
    </location>
</feature>
<feature type="sequence conflict" description="In Ref. 6; AAA86286." evidence="10" ref="6">
    <original>R</original>
    <variation>L</variation>
    <location>
        <position position="283"/>
    </location>
</feature>
<feature type="helix" evidence="12">
    <location>
        <begin position="24"/>
        <end position="26"/>
    </location>
</feature>
<feature type="helix" evidence="12">
    <location>
        <begin position="28"/>
        <end position="33"/>
    </location>
</feature>
<feature type="helix" evidence="12">
    <location>
        <begin position="43"/>
        <end position="60"/>
    </location>
</feature>
<feature type="helix" evidence="12">
    <location>
        <begin position="75"/>
        <end position="85"/>
    </location>
</feature>
<feature type="strand" evidence="13">
    <location>
        <begin position="87"/>
        <end position="89"/>
    </location>
</feature>
<feature type="helix" evidence="12">
    <location>
        <begin position="91"/>
        <end position="96"/>
    </location>
</feature>
<feature type="helix" evidence="12">
    <location>
        <begin position="100"/>
        <end position="113"/>
    </location>
</feature>
<feature type="helix" evidence="12">
    <location>
        <begin position="120"/>
        <end position="133"/>
    </location>
</feature>
<feature type="strand" evidence="12">
    <location>
        <begin position="138"/>
        <end position="143"/>
    </location>
</feature>
<feature type="helix" evidence="12">
    <location>
        <begin position="150"/>
        <end position="163"/>
    </location>
</feature>
<feature type="helix" evidence="12">
    <location>
        <begin position="166"/>
        <end position="169"/>
    </location>
</feature>
<feature type="helix" evidence="12">
    <location>
        <begin position="174"/>
        <end position="182"/>
    </location>
</feature>
<feature type="strand" evidence="12">
    <location>
        <begin position="191"/>
        <end position="194"/>
    </location>
</feature>
<feature type="helix" evidence="12">
    <location>
        <begin position="201"/>
        <end position="213"/>
    </location>
</feature>
<feature type="turn" evidence="12">
    <location>
        <begin position="219"/>
        <end position="224"/>
    </location>
</feature>
<feature type="helix" evidence="12">
    <location>
        <begin position="225"/>
        <end position="232"/>
    </location>
</feature>
<feature type="strand" evidence="12">
    <location>
        <begin position="237"/>
        <end position="239"/>
    </location>
</feature>
<feature type="helix" evidence="12">
    <location>
        <begin position="249"/>
        <end position="262"/>
    </location>
</feature>
<feature type="helix" evidence="12">
    <location>
        <begin position="265"/>
        <end position="267"/>
    </location>
</feature>
<feature type="helix" evidence="12">
    <location>
        <begin position="270"/>
        <end position="279"/>
    </location>
</feature>
<feature type="turn" evidence="12">
    <location>
        <begin position="283"/>
        <end position="285"/>
    </location>
</feature>
<feature type="strand" evidence="12">
    <location>
        <begin position="287"/>
        <end position="291"/>
    </location>
</feature>
<feature type="helix" evidence="12">
    <location>
        <begin position="300"/>
        <end position="303"/>
    </location>
</feature>
<feature type="turn" evidence="12">
    <location>
        <begin position="304"/>
        <end position="306"/>
    </location>
</feature>
<feature type="helix" evidence="12">
    <location>
        <begin position="307"/>
        <end position="317"/>
    </location>
</feature>
<feature type="strand" evidence="11">
    <location>
        <begin position="325"/>
        <end position="327"/>
    </location>
</feature>
<feature type="helix" evidence="12">
    <location>
        <begin position="332"/>
        <end position="342"/>
    </location>
</feature>
<feature type="helix" evidence="12">
    <location>
        <begin position="360"/>
        <end position="374"/>
    </location>
</feature>
<feature type="strand" evidence="12">
    <location>
        <begin position="375"/>
        <end position="378"/>
    </location>
</feature>
<feature type="strand" evidence="12">
    <location>
        <begin position="381"/>
        <end position="384"/>
    </location>
</feature>
<feature type="helix" evidence="12">
    <location>
        <begin position="390"/>
        <end position="392"/>
    </location>
</feature>
<feature type="turn" evidence="12">
    <location>
        <begin position="399"/>
        <end position="401"/>
    </location>
</feature>
<feature type="helix" evidence="12">
    <location>
        <begin position="405"/>
        <end position="416"/>
    </location>
</feature>
<protein>
    <recommendedName>
        <fullName>Protein farnesyltransferase subunit beta</fullName>
        <shortName>FTase-beta</shortName>
        <ecNumber>2.5.1.58</ecNumber>
    </recommendedName>
    <alternativeName>
        <fullName>CAAX farnesyltransferase subunit beta</fullName>
    </alternativeName>
    <alternativeName>
        <fullName>Ras proteins prenyltransferase subunit beta</fullName>
    </alternativeName>
</protein>
<name>FNTB_HUMAN</name>
<dbReference type="EC" id="2.5.1.58"/>
<dbReference type="EMBL" id="L00635">
    <property type="protein sequence ID" value="AAA35854.1"/>
    <property type="molecule type" value="mRNA"/>
</dbReference>
<dbReference type="EMBL" id="AK303739">
    <property type="protein sequence ID" value="BAG64712.1"/>
    <property type="molecule type" value="mRNA"/>
</dbReference>
<dbReference type="EMBL" id="AK315714">
    <property type="protein sequence ID" value="BAG38073.1"/>
    <property type="molecule type" value="mRNA"/>
</dbReference>
<dbReference type="EMBL" id="AL135745">
    <property type="status" value="NOT_ANNOTATED_CDS"/>
    <property type="molecule type" value="Genomic_DNA"/>
</dbReference>
<dbReference type="EMBL" id="AL139022">
    <property type="status" value="NOT_ANNOTATED_CDS"/>
    <property type="molecule type" value="Genomic_DNA"/>
</dbReference>
<dbReference type="EMBL" id="CH471061">
    <property type="protein sequence ID" value="EAW80897.1"/>
    <property type="molecule type" value="Genomic_DNA"/>
</dbReference>
<dbReference type="EMBL" id="BC020232">
    <property type="protein sequence ID" value="AAH20232.1"/>
    <property type="molecule type" value="mRNA"/>
</dbReference>
<dbReference type="EMBL" id="L10414">
    <property type="protein sequence ID" value="AAA86286.1"/>
    <property type="molecule type" value="mRNA"/>
</dbReference>
<dbReference type="CCDS" id="CCDS9769.1">
    <molecule id="P49356-1"/>
</dbReference>
<dbReference type="PIR" id="B49274">
    <property type="entry name" value="B49274"/>
</dbReference>
<dbReference type="RefSeq" id="NP_001189487.1">
    <molecule id="P49356-2"/>
    <property type="nucleotide sequence ID" value="NM_001202558.1"/>
</dbReference>
<dbReference type="RefSeq" id="NP_002019.1">
    <molecule id="P49356-1"/>
    <property type="nucleotide sequence ID" value="NM_002028.4"/>
</dbReference>
<dbReference type="PDB" id="1JCQ">
    <property type="method" value="X-ray"/>
    <property type="resolution" value="2.30 A"/>
    <property type="chains" value="B=1-437"/>
</dbReference>
<dbReference type="PDB" id="1LD7">
    <property type="method" value="X-ray"/>
    <property type="resolution" value="2.00 A"/>
    <property type="chains" value="B=1-437"/>
</dbReference>
<dbReference type="PDB" id="1LD8">
    <property type="method" value="X-ray"/>
    <property type="resolution" value="1.80 A"/>
    <property type="chains" value="B=1-437"/>
</dbReference>
<dbReference type="PDB" id="1MZC">
    <property type="method" value="X-ray"/>
    <property type="resolution" value="2.00 A"/>
    <property type="chains" value="B=1-437"/>
</dbReference>
<dbReference type="PDB" id="1S63">
    <property type="method" value="X-ray"/>
    <property type="resolution" value="1.90 A"/>
    <property type="chains" value="B=1-437"/>
</dbReference>
<dbReference type="PDB" id="1SA4">
    <property type="method" value="X-ray"/>
    <property type="resolution" value="2.10 A"/>
    <property type="chains" value="B=1-437"/>
</dbReference>
<dbReference type="PDB" id="1TN6">
    <property type="method" value="X-ray"/>
    <property type="resolution" value="1.80 A"/>
    <property type="chains" value="B=1-437"/>
</dbReference>
<dbReference type="PDB" id="2F0Y">
    <property type="method" value="X-ray"/>
    <property type="resolution" value="2.70 A"/>
    <property type="chains" value="B=1-437"/>
</dbReference>
<dbReference type="PDB" id="2H6F">
    <property type="method" value="X-ray"/>
    <property type="resolution" value="1.50 A"/>
    <property type="chains" value="B=1-437"/>
</dbReference>
<dbReference type="PDB" id="2H6G">
    <property type="method" value="X-ray"/>
    <property type="resolution" value="1.85 A"/>
    <property type="chains" value="B=1-437"/>
</dbReference>
<dbReference type="PDB" id="2H6H">
    <property type="method" value="X-ray"/>
    <property type="resolution" value="1.80 A"/>
    <property type="chains" value="B=1-437"/>
</dbReference>
<dbReference type="PDB" id="2H6I">
    <property type="method" value="X-ray"/>
    <property type="resolution" value="3.00 A"/>
    <property type="chains" value="B=1-437"/>
</dbReference>
<dbReference type="PDB" id="2IEJ">
    <property type="method" value="X-ray"/>
    <property type="resolution" value="1.80 A"/>
    <property type="chains" value="B=1-437"/>
</dbReference>
<dbReference type="PDB" id="3E37">
    <property type="method" value="X-ray"/>
    <property type="resolution" value="1.80 A"/>
    <property type="chains" value="B=1-437"/>
</dbReference>
<dbReference type="PDBsum" id="1JCQ"/>
<dbReference type="PDBsum" id="1LD7"/>
<dbReference type="PDBsum" id="1LD8"/>
<dbReference type="PDBsum" id="1MZC"/>
<dbReference type="PDBsum" id="1S63"/>
<dbReference type="PDBsum" id="1SA4"/>
<dbReference type="PDBsum" id="1TN6"/>
<dbReference type="PDBsum" id="2F0Y"/>
<dbReference type="PDBsum" id="2H6F"/>
<dbReference type="PDBsum" id="2H6G"/>
<dbReference type="PDBsum" id="2H6H"/>
<dbReference type="PDBsum" id="2H6I"/>
<dbReference type="PDBsum" id="2IEJ"/>
<dbReference type="PDBsum" id="3E37"/>
<dbReference type="SMR" id="P49356"/>
<dbReference type="BioGRID" id="108627">
    <property type="interactions" value="104"/>
</dbReference>
<dbReference type="BioGRID" id="1529403">
    <property type="interactions" value="8"/>
</dbReference>
<dbReference type="ComplexPortal" id="CPX-2165">
    <property type="entry name" value="Protein farnesyltransferase complex"/>
</dbReference>
<dbReference type="CORUM" id="P49356"/>
<dbReference type="FunCoup" id="P49356">
    <property type="interactions" value="1126"/>
</dbReference>
<dbReference type="IntAct" id="P49356">
    <property type="interactions" value="79"/>
</dbReference>
<dbReference type="MINT" id="P49356"/>
<dbReference type="STRING" id="9606.ENSP00000246166"/>
<dbReference type="BindingDB" id="P49356"/>
<dbReference type="ChEMBL" id="CHEMBL272"/>
<dbReference type="DrugBank" id="DB07216">
    <property type="generic name" value="(11S)-8-CHLORO-11-[1-(METHYLSULFONYL)PIPERIDIN-4-YL]-6-PIPERAZIN-1-YL-11H-BENZO[5,6]CYCLOHEPTA[1,2-B]PYRIDINE"/>
</dbReference>
<dbReference type="DrugBank" id="DB08674">
    <property type="generic name" value="(20S)-19,20,21,22-TETRAHYDRO-19-OXO-5H-18,20-ETHANO-12,14-ETHENO-6,10-METHENO-18H-BENZ[D]IMIDAZO[4,3-K][1,6,9,12]OXATRIAZA-CYCLOOCTADECOSINE-9-CARBONITRILE"/>
</dbReference>
<dbReference type="DrugBank" id="DB08676">
    <property type="generic name" value="(20S)-19,20,22,23-TETRAHYDRO-19-OXO-5H,21H-18,20-ETHANO-12,14-ETHENO-6,10-METHENOBENZ[D]IMIDAZO[4,3-L][1,6,9,13]OXATRIAZACYCLONOADECOSINE-9-CARBONITRILE"/>
</dbReference>
<dbReference type="DrugBank" id="DB06953">
    <property type="generic name" value="2-CHLORO-5-(3-CHLORO-PHENYL)-6-[(4-CYANO-PHENYL)-(3-METHYL-3H-IMIDAZOL-4-YL)- METHOXYMETHYL]-NICOTINONITRILE"/>
</dbReference>
<dbReference type="DrugBank" id="DB07771">
    <property type="generic name" value="[(3,7,11-TRIMETHYL-DODECA-2,6,10-TRIENYLOXYCARBAMOYL)-METHYL]-PHOSPHONIC ACID"/>
</dbReference>
<dbReference type="DrugBank" id="DB07895">
    <property type="generic name" value="ALPHA-HYDROXYFARNESYLPHOSPHONIC ACID"/>
</dbReference>
<dbReference type="DrugBank" id="DB04893">
    <property type="generic name" value="AZD3409"/>
</dbReference>
<dbReference type="DrugBank" id="DB12234">
    <property type="generic name" value="BMS-214662"/>
</dbReference>
<dbReference type="DrugBank" id="DB07780">
    <property type="generic name" value="Farnesyl diphosphate"/>
</dbReference>
<dbReference type="DrugBank" id="DB07841">
    <property type="generic name" value="Geranylgeranyl diphosphate"/>
</dbReference>
<dbReference type="DrugBank" id="DB07227">
    <property type="generic name" value="L-778123"/>
</dbReference>
<dbReference type="DrugBank" id="DB06448">
    <property type="generic name" value="Lonafarnib"/>
</dbReference>
<dbReference type="DrugBank" id="DB18125">
    <property type="generic name" value="PTX-100"/>
</dbReference>
<dbReference type="DrugBank" id="DB04960">
    <property type="generic name" value="Tipifarnib"/>
</dbReference>
<dbReference type="DrugCentral" id="P49356"/>
<dbReference type="GuidetoPHARMACOLOGY" id="2826"/>
<dbReference type="iPTMnet" id="P49356"/>
<dbReference type="PhosphoSitePlus" id="P49356"/>
<dbReference type="BioMuta" id="FNTB"/>
<dbReference type="DMDM" id="1346696"/>
<dbReference type="jPOST" id="P49356"/>
<dbReference type="MassIVE" id="P49356"/>
<dbReference type="PaxDb" id="9606-ENSP00000246166"/>
<dbReference type="PeptideAtlas" id="P49356"/>
<dbReference type="ProteomicsDB" id="55995">
    <molecule id="P49356-1"/>
</dbReference>
<dbReference type="Pumba" id="P49356"/>
<dbReference type="Antibodypedia" id="54004">
    <property type="antibodies" value="282 antibodies from 33 providers"/>
</dbReference>
<dbReference type="DNASU" id="2342"/>
<dbReference type="Ensembl" id="ENST00000246166.3">
    <molecule id="P49356-1"/>
    <property type="protein sequence ID" value="ENSP00000246166.2"/>
    <property type="gene ID" value="ENSG00000257365.8"/>
</dbReference>
<dbReference type="GeneID" id="100529261"/>
<dbReference type="GeneID" id="2342"/>
<dbReference type="KEGG" id="hsa:100529261"/>
<dbReference type="KEGG" id="hsa:2342"/>
<dbReference type="MANE-Select" id="ENST00000246166.3">
    <property type="protein sequence ID" value="ENSP00000246166.2"/>
    <property type="RefSeq nucleotide sequence ID" value="NM_002028.4"/>
    <property type="RefSeq protein sequence ID" value="NP_002019.1"/>
</dbReference>
<dbReference type="UCSC" id="uc001xia.4">
    <molecule id="P49356-1"/>
    <property type="organism name" value="human"/>
</dbReference>
<dbReference type="AGR" id="HGNC:3785"/>
<dbReference type="AGR" id="HGNC:42960"/>
<dbReference type="CTD" id="100529261"/>
<dbReference type="CTD" id="2342"/>
<dbReference type="DisGeNET" id="2342"/>
<dbReference type="GeneCards" id="FNTB"/>
<dbReference type="HGNC" id="HGNC:3785">
    <property type="gene designation" value="FNTB"/>
</dbReference>
<dbReference type="HPA" id="ENSG00000257365">
    <property type="expression patterns" value="Tissue enriched (brain)"/>
</dbReference>
<dbReference type="MIM" id="134636">
    <property type="type" value="gene"/>
</dbReference>
<dbReference type="neXtProt" id="NX_P49356"/>
<dbReference type="OpenTargets" id="ENSG00000257365"/>
<dbReference type="PharmGKB" id="PA28202"/>
<dbReference type="VEuPathDB" id="HostDB:ENSG00000257365"/>
<dbReference type="eggNOG" id="KOG0365">
    <property type="taxonomic scope" value="Eukaryota"/>
</dbReference>
<dbReference type="GeneTree" id="ENSGT00950000183128"/>
<dbReference type="HOGENOM" id="CLU_028946_0_1_1"/>
<dbReference type="InParanoid" id="P49356"/>
<dbReference type="OMA" id="WCIYWIL"/>
<dbReference type="OrthoDB" id="10261146at2759"/>
<dbReference type="PAN-GO" id="P49356">
    <property type="GO annotations" value="3 GO annotations based on evolutionary models"/>
</dbReference>
<dbReference type="PhylomeDB" id="P49356"/>
<dbReference type="TreeFam" id="TF353162"/>
<dbReference type="BRENDA" id="2.5.1.58">
    <property type="organism ID" value="2681"/>
</dbReference>
<dbReference type="BRENDA" id="2.5.1.59">
    <property type="organism ID" value="2681"/>
</dbReference>
<dbReference type="PathwayCommons" id="P49356"/>
<dbReference type="Reactome" id="R-HSA-2514859">
    <property type="pathway name" value="Inactivation, recovery and regulation of the phototransduction cascade"/>
</dbReference>
<dbReference type="Reactome" id="R-HSA-9648002">
    <property type="pathway name" value="RAS processing"/>
</dbReference>
<dbReference type="Reactome" id="R-HSA-9679191">
    <property type="pathway name" value="Potential therapeutics for SARS"/>
</dbReference>
<dbReference type="SignaLink" id="P49356"/>
<dbReference type="SIGNOR" id="P49356"/>
<dbReference type="BioGRID-ORCS" id="100529261">
    <property type="hits" value="21 hits in 176 CRISPR screens"/>
</dbReference>
<dbReference type="BioGRID-ORCS" id="2342">
    <property type="hits" value="655 hits in 1154 CRISPR screens"/>
</dbReference>
<dbReference type="EvolutionaryTrace" id="P49356"/>
<dbReference type="GeneWiki" id="FNTB"/>
<dbReference type="Pharos" id="P49356">
    <property type="development level" value="Tclin"/>
</dbReference>
<dbReference type="PRO" id="PR:P49356"/>
<dbReference type="Proteomes" id="UP000005640">
    <property type="component" value="Chromosome 14"/>
</dbReference>
<dbReference type="RNAct" id="P49356">
    <property type="molecule type" value="protein"/>
</dbReference>
<dbReference type="Bgee" id="ENSG00000257365">
    <property type="expression patterns" value="Expressed in C1 segment of cervical spinal cord and 98 other cell types or tissues"/>
</dbReference>
<dbReference type="ExpressionAtlas" id="P49356">
    <property type="expression patterns" value="baseline and differential"/>
</dbReference>
<dbReference type="GO" id="GO:0005829">
    <property type="term" value="C:cytosol"/>
    <property type="evidence" value="ECO:0000304"/>
    <property type="project" value="Reactome"/>
</dbReference>
<dbReference type="GO" id="GO:0005875">
    <property type="term" value="C:microtubule associated complex"/>
    <property type="evidence" value="ECO:0000314"/>
    <property type="project" value="BHF-UCL"/>
</dbReference>
<dbReference type="GO" id="GO:0005965">
    <property type="term" value="C:protein farnesyltransferase complex"/>
    <property type="evidence" value="ECO:0000314"/>
    <property type="project" value="UniProtKB"/>
</dbReference>
<dbReference type="GO" id="GO:0010698">
    <property type="term" value="F:acetyltransferase activator activity"/>
    <property type="evidence" value="ECO:0000314"/>
    <property type="project" value="BHF-UCL"/>
</dbReference>
<dbReference type="GO" id="GO:0019899">
    <property type="term" value="F:enzyme binding"/>
    <property type="evidence" value="ECO:0000353"/>
    <property type="project" value="BHF-UCL"/>
</dbReference>
<dbReference type="GO" id="GO:0042277">
    <property type="term" value="F:peptide binding"/>
    <property type="evidence" value="ECO:0007669"/>
    <property type="project" value="Ensembl"/>
</dbReference>
<dbReference type="GO" id="GO:0004660">
    <property type="term" value="F:protein farnesyltransferase activity"/>
    <property type="evidence" value="ECO:0000314"/>
    <property type="project" value="UniProtKB"/>
</dbReference>
<dbReference type="GO" id="GO:0008270">
    <property type="term" value="F:zinc ion binding"/>
    <property type="evidence" value="ECO:0000314"/>
    <property type="project" value="UniProtKB"/>
</dbReference>
<dbReference type="GO" id="GO:0006629">
    <property type="term" value="P:lipid metabolic process"/>
    <property type="evidence" value="ECO:0007669"/>
    <property type="project" value="UniProtKB-KW"/>
</dbReference>
<dbReference type="GO" id="GO:0045787">
    <property type="term" value="P:positive regulation of cell cycle"/>
    <property type="evidence" value="ECO:0007669"/>
    <property type="project" value="Ensembl"/>
</dbReference>
<dbReference type="GO" id="GO:0008284">
    <property type="term" value="P:positive regulation of cell population proliferation"/>
    <property type="evidence" value="ECO:0007669"/>
    <property type="project" value="Ensembl"/>
</dbReference>
<dbReference type="GO" id="GO:0018343">
    <property type="term" value="P:protein farnesylation"/>
    <property type="evidence" value="ECO:0000314"/>
    <property type="project" value="UniProtKB"/>
</dbReference>
<dbReference type="GO" id="GO:0060632">
    <property type="term" value="P:regulation of microtubule-based movement"/>
    <property type="evidence" value="ECO:0000314"/>
    <property type="project" value="BHF-UCL"/>
</dbReference>
<dbReference type="CDD" id="cd02893">
    <property type="entry name" value="FTase"/>
    <property type="match status" value="1"/>
</dbReference>
<dbReference type="FunFam" id="1.50.10.20:FF:000007">
    <property type="entry name" value="Protein farnesyltransferase subunit beta"/>
    <property type="match status" value="1"/>
</dbReference>
<dbReference type="Gene3D" id="1.50.10.20">
    <property type="match status" value="1"/>
</dbReference>
<dbReference type="InterPro" id="IPR026872">
    <property type="entry name" value="FTB"/>
</dbReference>
<dbReference type="InterPro" id="IPR045089">
    <property type="entry name" value="PGGT1B-like"/>
</dbReference>
<dbReference type="InterPro" id="IPR001330">
    <property type="entry name" value="Prenyltrans"/>
</dbReference>
<dbReference type="InterPro" id="IPR008930">
    <property type="entry name" value="Terpenoid_cyclase/PrenylTrfase"/>
</dbReference>
<dbReference type="PANTHER" id="PTHR11774">
    <property type="entry name" value="GERANYLGERANYL TRANSFERASE TYPE BETA SUBUNIT"/>
    <property type="match status" value="1"/>
</dbReference>
<dbReference type="PANTHER" id="PTHR11774:SF6">
    <property type="entry name" value="PROTEIN FARNESYLTRANSFERASE SUBUNIT BETA"/>
    <property type="match status" value="1"/>
</dbReference>
<dbReference type="Pfam" id="PF00432">
    <property type="entry name" value="Prenyltrans"/>
    <property type="match status" value="1"/>
</dbReference>
<dbReference type="SFLD" id="SFLDG01015">
    <property type="entry name" value="Prenyltransferase_Like_1"/>
    <property type="match status" value="1"/>
</dbReference>
<dbReference type="SUPFAM" id="SSF48239">
    <property type="entry name" value="Terpenoid cyclases/Protein prenyltransferases"/>
    <property type="match status" value="1"/>
</dbReference>
<organism>
    <name type="scientific">Homo sapiens</name>
    <name type="common">Human</name>
    <dbReference type="NCBI Taxonomy" id="9606"/>
    <lineage>
        <taxon>Eukaryota</taxon>
        <taxon>Metazoa</taxon>
        <taxon>Chordata</taxon>
        <taxon>Craniata</taxon>
        <taxon>Vertebrata</taxon>
        <taxon>Euteleostomi</taxon>
        <taxon>Mammalia</taxon>
        <taxon>Eutheria</taxon>
        <taxon>Euarchontoglires</taxon>
        <taxon>Primates</taxon>
        <taxon>Haplorrhini</taxon>
        <taxon>Catarrhini</taxon>
        <taxon>Hominidae</taxon>
        <taxon>Homo</taxon>
    </lineage>
</organism>